<protein>
    <recommendedName>
        <fullName evidence="1">Peptidyl-tRNA hydrolase</fullName>
        <shortName evidence="1">Pth</shortName>
        <ecNumber evidence="1">3.1.1.29</ecNumber>
    </recommendedName>
</protein>
<accession>Q1GBP4</accession>
<name>PTH_LACDA</name>
<sequence length="185" mass="20761">MKLIVALGNPGLKYEKTKHNTGFMALDHYLDEKGLRLDRDKFTALYAKEKVAGEDVIFMEPQTYMNESGRAVGAAAKFFKIDPSDILVIHDDMDMPIAKLRIRAGGKSGGHNGIKSIIACLGTEKFNRLKIGIRHPDKQSVVSWVLTPFNPDQQKELEASFAKVDQIIDDFIAGKDAQYLMNRYN</sequence>
<organism>
    <name type="scientific">Lactobacillus delbrueckii subsp. bulgaricus (strain ATCC 11842 / DSM 20081 / BCRC 10696 / JCM 1002 / NBRC 13953 / NCIMB 11778 / NCTC 12712 / WDCM 00102 / Lb 14)</name>
    <dbReference type="NCBI Taxonomy" id="390333"/>
    <lineage>
        <taxon>Bacteria</taxon>
        <taxon>Bacillati</taxon>
        <taxon>Bacillota</taxon>
        <taxon>Bacilli</taxon>
        <taxon>Lactobacillales</taxon>
        <taxon>Lactobacillaceae</taxon>
        <taxon>Lactobacillus</taxon>
    </lineage>
</organism>
<comment type="function">
    <text evidence="1">Hydrolyzes ribosome-free peptidyl-tRNAs (with 1 or more amino acids incorporated), which drop off the ribosome during protein synthesis, or as a result of ribosome stalling.</text>
</comment>
<comment type="function">
    <text evidence="1">Catalyzes the release of premature peptidyl moieties from peptidyl-tRNA molecules trapped in stalled 50S ribosomal subunits, and thus maintains levels of free tRNAs and 50S ribosomes.</text>
</comment>
<comment type="catalytic activity">
    <reaction evidence="1">
        <text>an N-acyl-L-alpha-aminoacyl-tRNA + H2O = an N-acyl-L-amino acid + a tRNA + H(+)</text>
        <dbReference type="Rhea" id="RHEA:54448"/>
        <dbReference type="Rhea" id="RHEA-COMP:10123"/>
        <dbReference type="Rhea" id="RHEA-COMP:13883"/>
        <dbReference type="ChEBI" id="CHEBI:15377"/>
        <dbReference type="ChEBI" id="CHEBI:15378"/>
        <dbReference type="ChEBI" id="CHEBI:59874"/>
        <dbReference type="ChEBI" id="CHEBI:78442"/>
        <dbReference type="ChEBI" id="CHEBI:138191"/>
        <dbReference type="EC" id="3.1.1.29"/>
    </reaction>
</comment>
<comment type="subunit">
    <text evidence="1">Monomer.</text>
</comment>
<comment type="subcellular location">
    <subcellularLocation>
        <location evidence="1">Cytoplasm</location>
    </subcellularLocation>
</comment>
<comment type="similarity">
    <text evidence="1">Belongs to the PTH family.</text>
</comment>
<feature type="chain" id="PRO_0000264050" description="Peptidyl-tRNA hydrolase">
    <location>
        <begin position="1"/>
        <end position="185"/>
    </location>
</feature>
<feature type="active site" description="Proton acceptor" evidence="1">
    <location>
        <position position="19"/>
    </location>
</feature>
<feature type="binding site" evidence="1">
    <location>
        <position position="14"/>
    </location>
    <ligand>
        <name>tRNA</name>
        <dbReference type="ChEBI" id="CHEBI:17843"/>
    </ligand>
</feature>
<feature type="binding site" evidence="1">
    <location>
        <position position="64"/>
    </location>
    <ligand>
        <name>tRNA</name>
        <dbReference type="ChEBI" id="CHEBI:17843"/>
    </ligand>
</feature>
<feature type="binding site" evidence="1">
    <location>
        <position position="66"/>
    </location>
    <ligand>
        <name>tRNA</name>
        <dbReference type="ChEBI" id="CHEBI:17843"/>
    </ligand>
</feature>
<feature type="binding site" evidence="1">
    <location>
        <position position="112"/>
    </location>
    <ligand>
        <name>tRNA</name>
        <dbReference type="ChEBI" id="CHEBI:17843"/>
    </ligand>
</feature>
<feature type="site" description="Discriminates between blocked and unblocked aminoacyl-tRNA" evidence="1">
    <location>
        <position position="9"/>
    </location>
</feature>
<feature type="site" description="Stabilizes the basic form of H active site to accept a proton" evidence="1">
    <location>
        <position position="91"/>
    </location>
</feature>
<proteinExistence type="inferred from homology"/>
<dbReference type="EC" id="3.1.1.29" evidence="1"/>
<dbReference type="EMBL" id="CR954253">
    <property type="protein sequence ID" value="CAI97200.1"/>
    <property type="molecule type" value="Genomic_DNA"/>
</dbReference>
<dbReference type="RefSeq" id="WP_003612856.1">
    <property type="nucleotide sequence ID" value="NZ_JQAV01000001.1"/>
</dbReference>
<dbReference type="SMR" id="Q1GBP4"/>
<dbReference type="STRING" id="390333.Ldb0362"/>
<dbReference type="KEGG" id="ldb:Ldb0362"/>
<dbReference type="PATRIC" id="fig|390333.13.peg.426"/>
<dbReference type="eggNOG" id="COG0193">
    <property type="taxonomic scope" value="Bacteria"/>
</dbReference>
<dbReference type="HOGENOM" id="CLU_062456_4_1_9"/>
<dbReference type="BioCyc" id="LDEL390333:LDB_RS01525-MONOMER"/>
<dbReference type="Proteomes" id="UP000001259">
    <property type="component" value="Chromosome"/>
</dbReference>
<dbReference type="GO" id="GO:0005737">
    <property type="term" value="C:cytoplasm"/>
    <property type="evidence" value="ECO:0007669"/>
    <property type="project" value="UniProtKB-SubCell"/>
</dbReference>
<dbReference type="GO" id="GO:0004045">
    <property type="term" value="F:peptidyl-tRNA hydrolase activity"/>
    <property type="evidence" value="ECO:0007669"/>
    <property type="project" value="UniProtKB-UniRule"/>
</dbReference>
<dbReference type="GO" id="GO:0000049">
    <property type="term" value="F:tRNA binding"/>
    <property type="evidence" value="ECO:0007669"/>
    <property type="project" value="UniProtKB-UniRule"/>
</dbReference>
<dbReference type="GO" id="GO:0006515">
    <property type="term" value="P:protein quality control for misfolded or incompletely synthesized proteins"/>
    <property type="evidence" value="ECO:0007669"/>
    <property type="project" value="UniProtKB-UniRule"/>
</dbReference>
<dbReference type="GO" id="GO:0072344">
    <property type="term" value="P:rescue of stalled ribosome"/>
    <property type="evidence" value="ECO:0007669"/>
    <property type="project" value="UniProtKB-UniRule"/>
</dbReference>
<dbReference type="CDD" id="cd00462">
    <property type="entry name" value="PTH"/>
    <property type="match status" value="1"/>
</dbReference>
<dbReference type="FunFam" id="3.40.50.1470:FF:000001">
    <property type="entry name" value="Peptidyl-tRNA hydrolase"/>
    <property type="match status" value="1"/>
</dbReference>
<dbReference type="Gene3D" id="3.40.50.1470">
    <property type="entry name" value="Peptidyl-tRNA hydrolase"/>
    <property type="match status" value="1"/>
</dbReference>
<dbReference type="HAMAP" id="MF_00083">
    <property type="entry name" value="Pept_tRNA_hydro_bact"/>
    <property type="match status" value="1"/>
</dbReference>
<dbReference type="InterPro" id="IPR001328">
    <property type="entry name" value="Pept_tRNA_hydro"/>
</dbReference>
<dbReference type="InterPro" id="IPR018171">
    <property type="entry name" value="Pept_tRNA_hydro_CS"/>
</dbReference>
<dbReference type="InterPro" id="IPR036416">
    <property type="entry name" value="Pept_tRNA_hydro_sf"/>
</dbReference>
<dbReference type="NCBIfam" id="TIGR00447">
    <property type="entry name" value="pth"/>
    <property type="match status" value="1"/>
</dbReference>
<dbReference type="PANTHER" id="PTHR17224">
    <property type="entry name" value="PEPTIDYL-TRNA HYDROLASE"/>
    <property type="match status" value="1"/>
</dbReference>
<dbReference type="PANTHER" id="PTHR17224:SF1">
    <property type="entry name" value="PEPTIDYL-TRNA HYDROLASE"/>
    <property type="match status" value="1"/>
</dbReference>
<dbReference type="Pfam" id="PF01195">
    <property type="entry name" value="Pept_tRNA_hydro"/>
    <property type="match status" value="1"/>
</dbReference>
<dbReference type="SUPFAM" id="SSF53178">
    <property type="entry name" value="Peptidyl-tRNA hydrolase-like"/>
    <property type="match status" value="1"/>
</dbReference>
<dbReference type="PROSITE" id="PS01195">
    <property type="entry name" value="PEPT_TRNA_HYDROL_1"/>
    <property type="match status" value="1"/>
</dbReference>
<keyword id="KW-0963">Cytoplasm</keyword>
<keyword id="KW-0378">Hydrolase</keyword>
<keyword id="KW-1185">Reference proteome</keyword>
<keyword id="KW-0694">RNA-binding</keyword>
<keyword id="KW-0820">tRNA-binding</keyword>
<gene>
    <name evidence="1" type="primary">pth</name>
    <name type="ordered locus">Ldb0362</name>
</gene>
<reference key="1">
    <citation type="journal article" date="2006" name="Proc. Natl. Acad. Sci. U.S.A.">
        <title>The complete genome sequence of Lactobacillus bulgaricus reveals extensive and ongoing reductive evolution.</title>
        <authorList>
            <person name="van de Guchte M."/>
            <person name="Penaud S."/>
            <person name="Grimaldi C."/>
            <person name="Barbe V."/>
            <person name="Bryson K."/>
            <person name="Nicolas P."/>
            <person name="Robert C."/>
            <person name="Oztas S."/>
            <person name="Mangenot S."/>
            <person name="Couloux A."/>
            <person name="Loux V."/>
            <person name="Dervyn R."/>
            <person name="Bossy R."/>
            <person name="Bolotin A."/>
            <person name="Batto J.-M."/>
            <person name="Walunas T."/>
            <person name="Gibrat J.-F."/>
            <person name="Bessieres P."/>
            <person name="Weissenbach J."/>
            <person name="Ehrlich S.D."/>
            <person name="Maguin E."/>
        </authorList>
    </citation>
    <scope>NUCLEOTIDE SEQUENCE [LARGE SCALE GENOMIC DNA]</scope>
    <source>
        <strain>ATCC 11842 / DSM 20081 / BCRC 10696 / JCM 1002 / NBRC 13953 / NCIMB 11778 / NCTC 12712 / WDCM 00102 / Lb 14</strain>
    </source>
</reference>
<evidence type="ECO:0000255" key="1">
    <source>
        <dbReference type="HAMAP-Rule" id="MF_00083"/>
    </source>
</evidence>